<evidence type="ECO:0000255" key="1">
    <source>
        <dbReference type="HAMAP-Rule" id="MF_00747"/>
    </source>
</evidence>
<keyword id="KW-0067">ATP-binding</keyword>
<keyword id="KW-0963">Cytoplasm</keyword>
<keyword id="KW-0329">Glyoxylate bypass</keyword>
<keyword id="KW-0378">Hydrolase</keyword>
<keyword id="KW-0418">Kinase</keyword>
<keyword id="KW-0547">Nucleotide-binding</keyword>
<keyword id="KW-0904">Protein phosphatase</keyword>
<keyword id="KW-0723">Serine/threonine-protein kinase</keyword>
<keyword id="KW-0808">Transferase</keyword>
<keyword id="KW-0816">Tricarboxylic acid cycle</keyword>
<name>ACEK_BURO0</name>
<sequence length="605" mass="69920">MNHFPKLLSSQIGFDVAQTMLEYFDRHYRIFREAAVDAKTLFERGDWHGLQRLARERITSYDERVKECVEVLEDEYDAENIDDEVWQQIKLHYIGLLTSHRQPECAETFFNSVCCKILHRSYFSNDFIFVRPAISTEYLENDEPAAKPTYRAYYPGTDGLAVTLERIVTNFQLDPPFEDLTRDIGCVMQAIDDEFGHFDEAPNFQIHVLSSLFFRNKSAYIVGRIINADRVLPFAVPIRHVRPGVLALDTVLLRRDLLQIIFSFSHSYFLVDMGVPSAYVDFLCTIMPGKPKAEIYTSVGLQKQGKNLFYRDLLHHLSHSSDRFIIAPGIKGLVMLVFTLPSFPYVFKIIKDHFPPPKETTRAQIMEKYQLVKRHDRLGRMADTLEYSSVALPLARLDHALVRELEKEVPSLLEYEDDKLVIKHLYIERRMTPLNLYLQNGSDADVEHGVKEYGNAVKELMKANIFPGDMLYKNFGVTRHGRVVFYDYDEIEYLTDCNVRRVPPPRNEEDELSGEPWYTVGPHDIFPETYGPFLLGDPRVRSVFMKHHADFFDPALWQASKDKLMQGELPDFYPYDAALRFSVRYPARFGATGENDGAGDAQRAA</sequence>
<gene>
    <name evidence="1" type="primary">aceK</name>
    <name type="ordered locus">Bcenmc03_2941</name>
</gene>
<accession>B1JZD3</accession>
<feature type="chain" id="PRO_1000133259" description="Isocitrate dehydrogenase kinase/phosphatase">
    <location>
        <begin position="1"/>
        <end position="605"/>
    </location>
</feature>
<feature type="active site" evidence="1">
    <location>
        <position position="383"/>
    </location>
</feature>
<feature type="binding site" evidence="1">
    <location>
        <begin position="327"/>
        <end position="333"/>
    </location>
    <ligand>
        <name>ATP</name>
        <dbReference type="ChEBI" id="CHEBI:30616"/>
    </ligand>
</feature>
<feature type="binding site" evidence="1">
    <location>
        <position position="348"/>
    </location>
    <ligand>
        <name>ATP</name>
        <dbReference type="ChEBI" id="CHEBI:30616"/>
    </ligand>
</feature>
<reference key="1">
    <citation type="submission" date="2008-02" db="EMBL/GenBank/DDBJ databases">
        <title>Complete sequence of chromosome 1 of Burkholderia cenocepacia MC0-3.</title>
        <authorList>
            <person name="Copeland A."/>
            <person name="Lucas S."/>
            <person name="Lapidus A."/>
            <person name="Barry K."/>
            <person name="Bruce D."/>
            <person name="Goodwin L."/>
            <person name="Glavina del Rio T."/>
            <person name="Dalin E."/>
            <person name="Tice H."/>
            <person name="Pitluck S."/>
            <person name="Chain P."/>
            <person name="Malfatti S."/>
            <person name="Shin M."/>
            <person name="Vergez L."/>
            <person name="Schmutz J."/>
            <person name="Larimer F."/>
            <person name="Land M."/>
            <person name="Hauser L."/>
            <person name="Kyrpides N."/>
            <person name="Mikhailova N."/>
            <person name="Tiedje J."/>
            <person name="Richardson P."/>
        </authorList>
    </citation>
    <scope>NUCLEOTIDE SEQUENCE [LARGE SCALE GENOMIC DNA]</scope>
    <source>
        <strain>MC0-3</strain>
    </source>
</reference>
<organism>
    <name type="scientific">Burkholderia orbicola (strain MC0-3)</name>
    <dbReference type="NCBI Taxonomy" id="406425"/>
    <lineage>
        <taxon>Bacteria</taxon>
        <taxon>Pseudomonadati</taxon>
        <taxon>Pseudomonadota</taxon>
        <taxon>Betaproteobacteria</taxon>
        <taxon>Burkholderiales</taxon>
        <taxon>Burkholderiaceae</taxon>
        <taxon>Burkholderia</taxon>
        <taxon>Burkholderia cepacia complex</taxon>
        <taxon>Burkholderia orbicola</taxon>
    </lineage>
</organism>
<protein>
    <recommendedName>
        <fullName evidence="1">Isocitrate dehydrogenase kinase/phosphatase</fullName>
        <shortName evidence="1">IDH kinase/phosphatase</shortName>
        <shortName evidence="1">IDHK/P</shortName>
        <ecNumber evidence="1">2.7.11.5</ecNumber>
        <ecNumber evidence="1">3.1.3.-</ecNumber>
    </recommendedName>
</protein>
<proteinExistence type="inferred from homology"/>
<comment type="function">
    <text evidence="1">Bifunctional enzyme which can phosphorylate or dephosphorylate isocitrate dehydrogenase (IDH) on a specific serine residue. This is a regulatory mechanism which enables bacteria to bypass the Krebs cycle via the glyoxylate shunt in response to the source of carbon. When bacteria are grown on glucose, IDH is fully active and unphosphorylated, but when grown on acetate or ethanol, the activity of IDH declines drastically concomitant with its phosphorylation.</text>
</comment>
<comment type="catalytic activity">
    <reaction evidence="1">
        <text>L-seryl-[isocitrate dehydrogenase] + ATP = O-phospho-L-seryl-[isocitrate dehydrogenase] + ADP + H(+)</text>
        <dbReference type="Rhea" id="RHEA:43540"/>
        <dbReference type="Rhea" id="RHEA-COMP:10605"/>
        <dbReference type="Rhea" id="RHEA-COMP:10606"/>
        <dbReference type="ChEBI" id="CHEBI:15378"/>
        <dbReference type="ChEBI" id="CHEBI:29999"/>
        <dbReference type="ChEBI" id="CHEBI:30616"/>
        <dbReference type="ChEBI" id="CHEBI:83421"/>
        <dbReference type="ChEBI" id="CHEBI:456216"/>
        <dbReference type="EC" id="2.7.11.5"/>
    </reaction>
</comment>
<comment type="subcellular location">
    <subcellularLocation>
        <location evidence="1">Cytoplasm</location>
    </subcellularLocation>
</comment>
<comment type="similarity">
    <text evidence="1">Belongs to the AceK family.</text>
</comment>
<dbReference type="EC" id="2.7.11.5" evidence="1"/>
<dbReference type="EC" id="3.1.3.-" evidence="1"/>
<dbReference type="EMBL" id="CP000958">
    <property type="protein sequence ID" value="ACA92099.1"/>
    <property type="molecule type" value="Genomic_DNA"/>
</dbReference>
<dbReference type="RefSeq" id="WP_012329320.1">
    <property type="nucleotide sequence ID" value="NC_010508.1"/>
</dbReference>
<dbReference type="SMR" id="B1JZD3"/>
<dbReference type="GeneID" id="83049721"/>
<dbReference type="KEGG" id="bcm:Bcenmc03_2941"/>
<dbReference type="HOGENOM" id="CLU_033804_1_1_4"/>
<dbReference type="Proteomes" id="UP000002169">
    <property type="component" value="Chromosome 1"/>
</dbReference>
<dbReference type="GO" id="GO:0005737">
    <property type="term" value="C:cytoplasm"/>
    <property type="evidence" value="ECO:0007669"/>
    <property type="project" value="UniProtKB-SubCell"/>
</dbReference>
<dbReference type="GO" id="GO:0008772">
    <property type="term" value="F:[isocitrate dehydrogenase (NADP+)] kinase activity"/>
    <property type="evidence" value="ECO:0007669"/>
    <property type="project" value="UniProtKB-UniRule"/>
</dbReference>
<dbReference type="GO" id="GO:0016208">
    <property type="term" value="F:AMP binding"/>
    <property type="evidence" value="ECO:0007669"/>
    <property type="project" value="TreeGrafter"/>
</dbReference>
<dbReference type="GO" id="GO:0005524">
    <property type="term" value="F:ATP binding"/>
    <property type="evidence" value="ECO:0007669"/>
    <property type="project" value="UniProtKB-UniRule"/>
</dbReference>
<dbReference type="GO" id="GO:0004721">
    <property type="term" value="F:phosphoprotein phosphatase activity"/>
    <property type="evidence" value="ECO:0007669"/>
    <property type="project" value="UniProtKB-KW"/>
</dbReference>
<dbReference type="GO" id="GO:0004674">
    <property type="term" value="F:protein serine/threonine kinase activity"/>
    <property type="evidence" value="ECO:0007669"/>
    <property type="project" value="UniProtKB-KW"/>
</dbReference>
<dbReference type="GO" id="GO:0006006">
    <property type="term" value="P:glucose metabolic process"/>
    <property type="evidence" value="ECO:0007669"/>
    <property type="project" value="InterPro"/>
</dbReference>
<dbReference type="GO" id="GO:0006097">
    <property type="term" value="P:glyoxylate cycle"/>
    <property type="evidence" value="ECO:0007669"/>
    <property type="project" value="UniProtKB-UniRule"/>
</dbReference>
<dbReference type="GO" id="GO:0006099">
    <property type="term" value="P:tricarboxylic acid cycle"/>
    <property type="evidence" value="ECO:0007669"/>
    <property type="project" value="UniProtKB-UniRule"/>
</dbReference>
<dbReference type="HAMAP" id="MF_00747">
    <property type="entry name" value="AceK"/>
    <property type="match status" value="1"/>
</dbReference>
<dbReference type="InterPro" id="IPR046855">
    <property type="entry name" value="AceK_kinase"/>
</dbReference>
<dbReference type="InterPro" id="IPR046854">
    <property type="entry name" value="AceK_regulatory"/>
</dbReference>
<dbReference type="InterPro" id="IPR010452">
    <property type="entry name" value="Isocitrate_DH_AceK"/>
</dbReference>
<dbReference type="NCBIfam" id="NF002804">
    <property type="entry name" value="PRK02946.1"/>
    <property type="match status" value="1"/>
</dbReference>
<dbReference type="PANTHER" id="PTHR39559">
    <property type="match status" value="1"/>
</dbReference>
<dbReference type="PANTHER" id="PTHR39559:SF1">
    <property type="entry name" value="ISOCITRATE DEHYDROGENASE KINASE_PHOSPHATASE"/>
    <property type="match status" value="1"/>
</dbReference>
<dbReference type="Pfam" id="PF06315">
    <property type="entry name" value="AceK_kinase"/>
    <property type="match status" value="1"/>
</dbReference>
<dbReference type="Pfam" id="PF20423">
    <property type="entry name" value="AceK_regulatory"/>
    <property type="match status" value="1"/>
</dbReference>
<dbReference type="PIRSF" id="PIRSF000719">
    <property type="entry name" value="AceK"/>
    <property type="match status" value="1"/>
</dbReference>